<organism>
    <name type="scientific">Variovorax paradoxus (strain S110)</name>
    <dbReference type="NCBI Taxonomy" id="543728"/>
    <lineage>
        <taxon>Bacteria</taxon>
        <taxon>Pseudomonadati</taxon>
        <taxon>Pseudomonadota</taxon>
        <taxon>Betaproteobacteria</taxon>
        <taxon>Burkholderiales</taxon>
        <taxon>Comamonadaceae</taxon>
        <taxon>Variovorax</taxon>
    </lineage>
</organism>
<name>UPP_VARPS</name>
<proteinExistence type="inferred from homology"/>
<evidence type="ECO:0000255" key="1">
    <source>
        <dbReference type="HAMAP-Rule" id="MF_01218"/>
    </source>
</evidence>
<protein>
    <recommendedName>
        <fullName evidence="1">Uracil phosphoribosyltransferase</fullName>
        <ecNumber evidence="1">2.4.2.9</ecNumber>
    </recommendedName>
    <alternativeName>
        <fullName evidence="1">UMP pyrophosphorylase</fullName>
    </alternativeName>
    <alternativeName>
        <fullName evidence="1">UPRTase</fullName>
    </alternativeName>
</protein>
<comment type="function">
    <text evidence="1">Catalyzes the conversion of uracil and 5-phospho-alpha-D-ribose 1-diphosphate (PRPP) to UMP and diphosphate.</text>
</comment>
<comment type="catalytic activity">
    <reaction evidence="1">
        <text>UMP + diphosphate = 5-phospho-alpha-D-ribose 1-diphosphate + uracil</text>
        <dbReference type="Rhea" id="RHEA:13017"/>
        <dbReference type="ChEBI" id="CHEBI:17568"/>
        <dbReference type="ChEBI" id="CHEBI:33019"/>
        <dbReference type="ChEBI" id="CHEBI:57865"/>
        <dbReference type="ChEBI" id="CHEBI:58017"/>
        <dbReference type="EC" id="2.4.2.9"/>
    </reaction>
</comment>
<comment type="cofactor">
    <cofactor evidence="1">
        <name>Mg(2+)</name>
        <dbReference type="ChEBI" id="CHEBI:18420"/>
    </cofactor>
    <text evidence="1">Binds 1 Mg(2+) ion per subunit. The magnesium is bound as Mg-PRPP.</text>
</comment>
<comment type="activity regulation">
    <text evidence="1">Allosterically activated by GTP.</text>
</comment>
<comment type="pathway">
    <text evidence="1">Pyrimidine metabolism; UMP biosynthesis via salvage pathway; UMP from uracil: step 1/1.</text>
</comment>
<comment type="similarity">
    <text evidence="1">Belongs to the UPRTase family.</text>
</comment>
<dbReference type="EC" id="2.4.2.9" evidence="1"/>
<dbReference type="EMBL" id="CP001635">
    <property type="protein sequence ID" value="ACS19286.1"/>
    <property type="molecule type" value="Genomic_DNA"/>
</dbReference>
<dbReference type="SMR" id="C5CLM9"/>
<dbReference type="STRING" id="543728.Vapar_2661"/>
<dbReference type="KEGG" id="vap:Vapar_2661"/>
<dbReference type="eggNOG" id="COG0035">
    <property type="taxonomic scope" value="Bacteria"/>
</dbReference>
<dbReference type="HOGENOM" id="CLU_067096_2_2_4"/>
<dbReference type="OrthoDB" id="9781675at2"/>
<dbReference type="UniPathway" id="UPA00574">
    <property type="reaction ID" value="UER00636"/>
</dbReference>
<dbReference type="GO" id="GO:0005525">
    <property type="term" value="F:GTP binding"/>
    <property type="evidence" value="ECO:0007669"/>
    <property type="project" value="UniProtKB-KW"/>
</dbReference>
<dbReference type="GO" id="GO:0000287">
    <property type="term" value="F:magnesium ion binding"/>
    <property type="evidence" value="ECO:0007669"/>
    <property type="project" value="UniProtKB-UniRule"/>
</dbReference>
<dbReference type="GO" id="GO:0004845">
    <property type="term" value="F:uracil phosphoribosyltransferase activity"/>
    <property type="evidence" value="ECO:0007669"/>
    <property type="project" value="UniProtKB-UniRule"/>
</dbReference>
<dbReference type="GO" id="GO:0044206">
    <property type="term" value="P:UMP salvage"/>
    <property type="evidence" value="ECO:0007669"/>
    <property type="project" value="UniProtKB-UniRule"/>
</dbReference>
<dbReference type="GO" id="GO:0006223">
    <property type="term" value="P:uracil salvage"/>
    <property type="evidence" value="ECO:0007669"/>
    <property type="project" value="InterPro"/>
</dbReference>
<dbReference type="CDD" id="cd06223">
    <property type="entry name" value="PRTases_typeI"/>
    <property type="match status" value="1"/>
</dbReference>
<dbReference type="FunFam" id="3.40.50.2020:FF:000003">
    <property type="entry name" value="Uracil phosphoribosyltransferase"/>
    <property type="match status" value="1"/>
</dbReference>
<dbReference type="Gene3D" id="3.40.50.2020">
    <property type="match status" value="1"/>
</dbReference>
<dbReference type="HAMAP" id="MF_01218_B">
    <property type="entry name" value="Upp_B"/>
    <property type="match status" value="1"/>
</dbReference>
<dbReference type="InterPro" id="IPR000836">
    <property type="entry name" value="PRibTrfase_dom"/>
</dbReference>
<dbReference type="InterPro" id="IPR029057">
    <property type="entry name" value="PRTase-like"/>
</dbReference>
<dbReference type="InterPro" id="IPR034332">
    <property type="entry name" value="Upp_B"/>
</dbReference>
<dbReference type="InterPro" id="IPR050054">
    <property type="entry name" value="UPRTase/APRTase"/>
</dbReference>
<dbReference type="InterPro" id="IPR005765">
    <property type="entry name" value="Ura_phspho_trans"/>
</dbReference>
<dbReference type="NCBIfam" id="NF001097">
    <property type="entry name" value="PRK00129.1"/>
    <property type="match status" value="1"/>
</dbReference>
<dbReference type="NCBIfam" id="TIGR01091">
    <property type="entry name" value="upp"/>
    <property type="match status" value="1"/>
</dbReference>
<dbReference type="PANTHER" id="PTHR32315">
    <property type="entry name" value="ADENINE PHOSPHORIBOSYLTRANSFERASE"/>
    <property type="match status" value="1"/>
</dbReference>
<dbReference type="PANTHER" id="PTHR32315:SF4">
    <property type="entry name" value="URACIL PHOSPHORIBOSYLTRANSFERASE, CHLOROPLASTIC"/>
    <property type="match status" value="1"/>
</dbReference>
<dbReference type="Pfam" id="PF14681">
    <property type="entry name" value="UPRTase"/>
    <property type="match status" value="1"/>
</dbReference>
<dbReference type="SUPFAM" id="SSF53271">
    <property type="entry name" value="PRTase-like"/>
    <property type="match status" value="1"/>
</dbReference>
<sequence length="209" mass="23101">MSNVHLVDHPLVQHKLTLMRRKDASTNSFRRLLNEISMLMAYEVTRDMPMQDIEVETPLETMQAKVIDGKKLVLVSILRAGTGILDGMLTVVPGARVGHIGLYRDPKTLTAVEYYFKMPGEMENRDVIVVDPMLATGNSAVAAVERLKELNPKSIKFVCLLTCPEGLATMQKAHPDVPVYTAAIDRELNSHGYILPGLGDAGDRIFGTK</sequence>
<reference key="1">
    <citation type="journal article" date="2011" name="J. Bacteriol.">
        <title>Complete genome sequence of the metabolically versatile plant growth-promoting endophyte, Variovorax paradoxus S110.</title>
        <authorList>
            <person name="Han J.I."/>
            <person name="Choi H.K."/>
            <person name="Lee S.W."/>
            <person name="Orwin P.M."/>
            <person name="Kim J."/>
            <person name="Laroe S.L."/>
            <person name="Kim T.G."/>
            <person name="O'Neil J."/>
            <person name="Leadbetter J.R."/>
            <person name="Lee S.Y."/>
            <person name="Hur C.G."/>
            <person name="Spain J.C."/>
            <person name="Ovchinnikova G."/>
            <person name="Goodwin L."/>
            <person name="Han C."/>
        </authorList>
    </citation>
    <scope>NUCLEOTIDE SEQUENCE [LARGE SCALE GENOMIC DNA]</scope>
    <source>
        <strain>S110</strain>
    </source>
</reference>
<keyword id="KW-0021">Allosteric enzyme</keyword>
<keyword id="KW-0328">Glycosyltransferase</keyword>
<keyword id="KW-0342">GTP-binding</keyword>
<keyword id="KW-0460">Magnesium</keyword>
<keyword id="KW-0547">Nucleotide-binding</keyword>
<keyword id="KW-0808">Transferase</keyword>
<gene>
    <name evidence="1" type="primary">upp</name>
    <name type="ordered locus">Vapar_2661</name>
</gene>
<accession>C5CLM9</accession>
<feature type="chain" id="PRO_1000213948" description="Uracil phosphoribosyltransferase">
    <location>
        <begin position="1"/>
        <end position="209"/>
    </location>
</feature>
<feature type="binding site" evidence="1">
    <location>
        <position position="79"/>
    </location>
    <ligand>
        <name>5-phospho-alpha-D-ribose 1-diphosphate</name>
        <dbReference type="ChEBI" id="CHEBI:58017"/>
    </ligand>
</feature>
<feature type="binding site" evidence="1">
    <location>
        <position position="104"/>
    </location>
    <ligand>
        <name>5-phospho-alpha-D-ribose 1-diphosphate</name>
        <dbReference type="ChEBI" id="CHEBI:58017"/>
    </ligand>
</feature>
<feature type="binding site" evidence="1">
    <location>
        <begin position="131"/>
        <end position="139"/>
    </location>
    <ligand>
        <name>5-phospho-alpha-D-ribose 1-diphosphate</name>
        <dbReference type="ChEBI" id="CHEBI:58017"/>
    </ligand>
</feature>
<feature type="binding site" evidence="1">
    <location>
        <position position="194"/>
    </location>
    <ligand>
        <name>uracil</name>
        <dbReference type="ChEBI" id="CHEBI:17568"/>
    </ligand>
</feature>
<feature type="binding site" evidence="1">
    <location>
        <begin position="199"/>
        <end position="201"/>
    </location>
    <ligand>
        <name>uracil</name>
        <dbReference type="ChEBI" id="CHEBI:17568"/>
    </ligand>
</feature>
<feature type="binding site" evidence="1">
    <location>
        <position position="200"/>
    </location>
    <ligand>
        <name>5-phospho-alpha-D-ribose 1-diphosphate</name>
        <dbReference type="ChEBI" id="CHEBI:58017"/>
    </ligand>
</feature>